<reference key="1">
    <citation type="journal article" date="1998" name="Science">
        <title>Genome sequence of the nematode C. elegans: a platform for investigating biology.</title>
        <authorList>
            <consortium name="The C. elegans sequencing consortium"/>
        </authorList>
    </citation>
    <scope>NUCLEOTIDE SEQUENCE [LARGE SCALE GENOMIC DNA]</scope>
    <source>
        <strain>Bristol N2</strain>
    </source>
</reference>
<comment type="subcellular location">
    <subcellularLocation>
        <location evidence="3">Membrane</location>
        <topology evidence="3">Multi-pass membrane protein</topology>
    </subcellularLocation>
</comment>
<comment type="similarity">
    <text evidence="3">Belongs to the major facilitator superfamily. Sodium/anion cotransporter family. VGLUT subfamily.</text>
</comment>
<dbReference type="EMBL" id="Z48055">
    <property type="protein sequence ID" value="CAA88134.1"/>
    <property type="molecule type" value="Genomic_DNA"/>
</dbReference>
<dbReference type="PIR" id="T24633">
    <property type="entry name" value="T24633"/>
</dbReference>
<dbReference type="RefSeq" id="NP_499277.1">
    <property type="nucleotide sequence ID" value="NM_066876.5"/>
</dbReference>
<dbReference type="SMR" id="Q10046"/>
<dbReference type="BioGRID" id="41636">
    <property type="interactions" value="1"/>
</dbReference>
<dbReference type="DIP" id="DIP-25883N"/>
<dbReference type="FunCoup" id="Q10046">
    <property type="interactions" value="17"/>
</dbReference>
<dbReference type="STRING" id="6239.T07A5.3.1"/>
<dbReference type="GlyCosmos" id="Q10046">
    <property type="glycosylation" value="1 site, No reported glycans"/>
</dbReference>
<dbReference type="PaxDb" id="6239-T07A5.3"/>
<dbReference type="EnsemblMetazoa" id="T07A5.3.1">
    <property type="protein sequence ID" value="T07A5.3.1"/>
    <property type="gene ID" value="WBGene00011556"/>
</dbReference>
<dbReference type="GeneID" id="176442"/>
<dbReference type="KEGG" id="cel:CELE_T07A5.3"/>
<dbReference type="UCSC" id="T07A5.3">
    <property type="organism name" value="c. elegans"/>
</dbReference>
<dbReference type="AGR" id="WB:WBGene00011556"/>
<dbReference type="CTD" id="176442"/>
<dbReference type="WormBase" id="T07A5.3">
    <property type="protein sequence ID" value="CE01648"/>
    <property type="gene ID" value="WBGene00011556"/>
    <property type="gene designation" value="vglu-3"/>
</dbReference>
<dbReference type="eggNOG" id="KOG2532">
    <property type="taxonomic scope" value="Eukaryota"/>
</dbReference>
<dbReference type="GeneTree" id="ENSGT00970000196433"/>
<dbReference type="HOGENOM" id="CLU_001265_5_0_1"/>
<dbReference type="InParanoid" id="Q10046"/>
<dbReference type="OrthoDB" id="2985014at2759"/>
<dbReference type="PhylomeDB" id="Q10046"/>
<dbReference type="Reactome" id="R-CEL-210500">
    <property type="pathway name" value="Glutamate Neurotransmitter Release Cycle"/>
</dbReference>
<dbReference type="Reactome" id="R-CEL-428643">
    <property type="pathway name" value="Organic anion transporters"/>
</dbReference>
<dbReference type="PRO" id="PR:Q10046"/>
<dbReference type="Proteomes" id="UP000001940">
    <property type="component" value="Chromosome III"/>
</dbReference>
<dbReference type="Bgee" id="WBGene00011556">
    <property type="expression patterns" value="Expressed in adult organism and 1 other cell type or tissue"/>
</dbReference>
<dbReference type="GO" id="GO:0060076">
    <property type="term" value="C:excitatory synapse"/>
    <property type="evidence" value="ECO:0000318"/>
    <property type="project" value="GO_Central"/>
</dbReference>
<dbReference type="GO" id="GO:0030672">
    <property type="term" value="C:synaptic vesicle membrane"/>
    <property type="evidence" value="ECO:0000318"/>
    <property type="project" value="GO_Central"/>
</dbReference>
<dbReference type="GO" id="GO:0005313">
    <property type="term" value="F:L-glutamate transmembrane transporter activity"/>
    <property type="evidence" value="ECO:0000318"/>
    <property type="project" value="GO_Central"/>
</dbReference>
<dbReference type="GO" id="GO:0005326">
    <property type="term" value="F:neurotransmitter transmembrane transporter activity"/>
    <property type="evidence" value="ECO:0000318"/>
    <property type="project" value="GO_Central"/>
</dbReference>
<dbReference type="GO" id="GO:0015293">
    <property type="term" value="F:symporter activity"/>
    <property type="evidence" value="ECO:0007669"/>
    <property type="project" value="UniProtKB-KW"/>
</dbReference>
<dbReference type="GO" id="GO:0098700">
    <property type="term" value="P:neurotransmitter loading into synaptic vesicle"/>
    <property type="evidence" value="ECO:0000318"/>
    <property type="project" value="GO_Central"/>
</dbReference>
<dbReference type="GO" id="GO:0050803">
    <property type="term" value="P:regulation of synapse structure or activity"/>
    <property type="evidence" value="ECO:0000318"/>
    <property type="project" value="GO_Central"/>
</dbReference>
<dbReference type="GO" id="GO:0006814">
    <property type="term" value="P:sodium ion transport"/>
    <property type="evidence" value="ECO:0007669"/>
    <property type="project" value="UniProtKB-KW"/>
</dbReference>
<dbReference type="GO" id="GO:0035249">
    <property type="term" value="P:synaptic transmission, glutamatergic"/>
    <property type="evidence" value="ECO:0000318"/>
    <property type="project" value="GO_Central"/>
</dbReference>
<dbReference type="FunFam" id="1.20.1250.20:FF:000226">
    <property type="entry name" value="Vesicular GLUtamate transporter"/>
    <property type="match status" value="1"/>
</dbReference>
<dbReference type="FunFam" id="1.20.1250.20:FF:000781">
    <property type="entry name" value="Vesicular GLUtamate transporter"/>
    <property type="match status" value="1"/>
</dbReference>
<dbReference type="Gene3D" id="1.20.1250.20">
    <property type="entry name" value="MFS general substrate transporter like domains"/>
    <property type="match status" value="2"/>
</dbReference>
<dbReference type="InterPro" id="IPR011701">
    <property type="entry name" value="MFS"/>
</dbReference>
<dbReference type="InterPro" id="IPR020846">
    <property type="entry name" value="MFS_dom"/>
</dbReference>
<dbReference type="InterPro" id="IPR050382">
    <property type="entry name" value="MFS_Na/Anion_cotransporter"/>
</dbReference>
<dbReference type="InterPro" id="IPR036259">
    <property type="entry name" value="MFS_trans_sf"/>
</dbReference>
<dbReference type="PANTHER" id="PTHR11662:SF206">
    <property type="entry name" value="MAJOR FACILITATOR SUPERFAMILY (MFS) PROFILE DOMAIN-CONTAINING PROTEIN-RELATED"/>
    <property type="match status" value="1"/>
</dbReference>
<dbReference type="PANTHER" id="PTHR11662">
    <property type="entry name" value="SOLUTE CARRIER FAMILY 17"/>
    <property type="match status" value="1"/>
</dbReference>
<dbReference type="Pfam" id="PF07690">
    <property type="entry name" value="MFS_1"/>
    <property type="match status" value="1"/>
</dbReference>
<dbReference type="SUPFAM" id="SSF103473">
    <property type="entry name" value="MFS general substrate transporter"/>
    <property type="match status" value="1"/>
</dbReference>
<dbReference type="PROSITE" id="PS50850">
    <property type="entry name" value="MFS"/>
    <property type="match status" value="1"/>
</dbReference>
<feature type="chain" id="PRO_0000220943" description="Potential vesicular glutamate transporter vglu-3">
    <location>
        <begin position="1"/>
        <end position="544"/>
    </location>
</feature>
<feature type="topological domain" description="Cytoplasmic" evidence="1">
    <location>
        <begin position="1"/>
        <end position="49"/>
    </location>
</feature>
<feature type="transmembrane region" description="Helical" evidence="1">
    <location>
        <begin position="50"/>
        <end position="70"/>
    </location>
</feature>
<feature type="topological domain" description="Extracellular" evidence="1">
    <location>
        <begin position="71"/>
        <end position="104"/>
    </location>
</feature>
<feature type="transmembrane region" description="Helical" evidence="1">
    <location>
        <begin position="105"/>
        <end position="125"/>
    </location>
</feature>
<feature type="topological domain" description="Cytoplasmic" evidence="1">
    <location>
        <begin position="126"/>
        <end position="127"/>
    </location>
</feature>
<feature type="transmembrane region" description="Helical" evidence="1">
    <location>
        <begin position="128"/>
        <end position="148"/>
    </location>
</feature>
<feature type="topological domain" description="Extracellular" evidence="1">
    <location>
        <begin position="149"/>
        <end position="154"/>
    </location>
</feature>
<feature type="transmembrane region" description="Helical" evidence="1">
    <location>
        <begin position="155"/>
        <end position="175"/>
    </location>
</feature>
<feature type="topological domain" description="Cytoplasmic" evidence="1">
    <location>
        <begin position="176"/>
        <end position="193"/>
    </location>
</feature>
<feature type="transmembrane region" description="Helical" evidence="1">
    <location>
        <begin position="194"/>
        <end position="214"/>
    </location>
</feature>
<feature type="topological domain" description="Extracellular" evidence="1">
    <location>
        <begin position="215"/>
        <end position="219"/>
    </location>
</feature>
<feature type="transmembrane region" description="Helical" evidence="1">
    <location>
        <begin position="220"/>
        <end position="240"/>
    </location>
</feature>
<feature type="topological domain" description="Cytoplasmic" evidence="1">
    <location>
        <begin position="241"/>
        <end position="285"/>
    </location>
</feature>
<feature type="transmembrane region" description="Helical" evidence="1">
    <location>
        <begin position="286"/>
        <end position="306"/>
    </location>
</feature>
<feature type="topological domain" description="Extracellular" evidence="1">
    <location>
        <begin position="307"/>
        <end position="323"/>
    </location>
</feature>
<feature type="transmembrane region" description="Helical" evidence="1">
    <location>
        <begin position="324"/>
        <end position="344"/>
    </location>
</feature>
<feature type="topological domain" description="Cytoplasmic" evidence="1">
    <location>
        <begin position="345"/>
        <end position="360"/>
    </location>
</feature>
<feature type="transmembrane region" description="Helical" evidence="1">
    <location>
        <begin position="361"/>
        <end position="381"/>
    </location>
</feature>
<feature type="topological domain" description="Extracellular" evidence="1">
    <location>
        <begin position="382"/>
        <end position="384"/>
    </location>
</feature>
<feature type="transmembrane region" description="Helical" evidence="1">
    <location>
        <begin position="385"/>
        <end position="405"/>
    </location>
</feature>
<feature type="topological domain" description="Cytoplasmic" evidence="1">
    <location>
        <begin position="406"/>
        <end position="416"/>
    </location>
</feature>
<feature type="transmembrane region" description="Helical" evidence="1">
    <location>
        <begin position="417"/>
        <end position="437"/>
    </location>
</feature>
<feature type="topological domain" description="Extracellular" evidence="1">
    <location>
        <begin position="438"/>
        <end position="450"/>
    </location>
</feature>
<feature type="transmembrane region" description="Helical" evidence="1">
    <location>
        <begin position="451"/>
        <end position="471"/>
    </location>
</feature>
<feature type="topological domain" description="Cytoplasmic" evidence="1">
    <location>
        <begin position="472"/>
        <end position="544"/>
    </location>
</feature>
<feature type="region of interest" description="Disordered" evidence="2">
    <location>
        <begin position="501"/>
        <end position="544"/>
    </location>
</feature>
<feature type="compositionally biased region" description="Basic and acidic residues" evidence="2">
    <location>
        <begin position="508"/>
        <end position="544"/>
    </location>
</feature>
<feature type="glycosylation site" description="N-linked (GlcNAc...) asparagine" evidence="1">
    <location>
        <position position="78"/>
    </location>
</feature>
<sequence>MPNGSIRNCANAVADTVRQTFSRKTWEHKEQLQTITEQKKFFLRKVRWQIAILAHFGFAISFGIRSNFGVAKNRMVNNFTDAYGEVHEREFLWTGAEVGMMESSFFYGYAASQIPAGVLAAKFAPNKIFMLGILVASFMNILSAISFNFHPYTDIFVMVVQAVQGLALGVLYPAMHGVWKFWAPPLERSKLATTAFTGSSVGVMTGLPASAYLVSHFSWSTPFYVFGVVGIIWSLIWMYVSSHSPETHGYISDDEKKQVTEKIGDVAVKNMSLTTLPWRDMMTSSAVWAIIICTFCRSWGFFLLLGNQLTYMKDVLHIDIKNSGFISIFPQFGMCIVTLATGQLCDYLRSSGKMSTEAVRKSVNTFGFTVEAMMLGCLAFVRDPVIAVTCLVIACTGSGSVLSGFNVNHFDIAPRYAPILMGIANGLGAVAGVGGMVTNTVTYQNPDGWKWVFLLAMAIDIFGVIFFLIFAKGDVLPWAREPEKEETFNEFVRRMSIKVRSLSRKTRNREGDTSYEKMEEDSEMKPCSKKVEARAPAEKSESSS</sequence>
<keyword id="KW-0325">Glycoprotein</keyword>
<keyword id="KW-0406">Ion transport</keyword>
<keyword id="KW-0472">Membrane</keyword>
<keyword id="KW-1185">Reference proteome</keyword>
<keyword id="KW-0915">Sodium</keyword>
<keyword id="KW-0739">Sodium transport</keyword>
<keyword id="KW-0769">Symport</keyword>
<keyword id="KW-0812">Transmembrane</keyword>
<keyword id="KW-1133">Transmembrane helix</keyword>
<keyword id="KW-0813">Transport</keyword>
<organism>
    <name type="scientific">Caenorhabditis elegans</name>
    <dbReference type="NCBI Taxonomy" id="6239"/>
    <lineage>
        <taxon>Eukaryota</taxon>
        <taxon>Metazoa</taxon>
        <taxon>Ecdysozoa</taxon>
        <taxon>Nematoda</taxon>
        <taxon>Chromadorea</taxon>
        <taxon>Rhabditida</taxon>
        <taxon>Rhabditina</taxon>
        <taxon>Rhabditomorpha</taxon>
        <taxon>Rhabditoidea</taxon>
        <taxon>Rhabditidae</taxon>
        <taxon>Peloderinae</taxon>
        <taxon>Caenorhabditis</taxon>
    </lineage>
</organism>
<gene>
    <name type="primary">vglu-3</name>
    <name type="ORF">T07A5.3</name>
</gene>
<evidence type="ECO:0000255" key="1"/>
<evidence type="ECO:0000256" key="2">
    <source>
        <dbReference type="SAM" id="MobiDB-lite"/>
    </source>
</evidence>
<evidence type="ECO:0000305" key="3"/>
<name>VGLU3_CAEEL</name>
<proteinExistence type="inferred from homology"/>
<protein>
    <recommendedName>
        <fullName>Potential vesicular glutamate transporter vglu-3</fullName>
    </recommendedName>
</protein>
<accession>Q10046</accession>